<accession>A0K973</accession>
<sequence>MKLFILAVGHKMPGWIASGFDEYTKRMPPELRIELREIKPELRSGGRSAESVMAAERQKIEAALPKGARLVALDERGRDWTTMQLAQALPGWQQDGRDVAFVIGGADGLDPDLKARADVLLRISSMTLPHGMVRVLLAEQLYRAWSITQNHPYHRA</sequence>
<feature type="chain" id="PRO_1000061762" description="Ribosomal RNA large subunit methyltransferase H">
    <location>
        <begin position="1"/>
        <end position="156"/>
    </location>
</feature>
<feature type="binding site" evidence="1">
    <location>
        <position position="73"/>
    </location>
    <ligand>
        <name>S-adenosyl-L-methionine</name>
        <dbReference type="ChEBI" id="CHEBI:59789"/>
    </ligand>
</feature>
<feature type="binding site" evidence="1">
    <location>
        <position position="104"/>
    </location>
    <ligand>
        <name>S-adenosyl-L-methionine</name>
        <dbReference type="ChEBI" id="CHEBI:59789"/>
    </ligand>
</feature>
<feature type="binding site" evidence="1">
    <location>
        <begin position="123"/>
        <end position="128"/>
    </location>
    <ligand>
        <name>S-adenosyl-L-methionine</name>
        <dbReference type="ChEBI" id="CHEBI:59789"/>
    </ligand>
</feature>
<protein>
    <recommendedName>
        <fullName evidence="1">Ribosomal RNA large subunit methyltransferase H</fullName>
        <ecNumber evidence="1">2.1.1.177</ecNumber>
    </recommendedName>
    <alternativeName>
        <fullName evidence="1">23S rRNA (pseudouridine1915-N3)-methyltransferase</fullName>
    </alternativeName>
    <alternativeName>
        <fullName evidence="1">23S rRNA m3Psi1915 methyltransferase</fullName>
    </alternativeName>
    <alternativeName>
        <fullName evidence="1">rRNA (pseudouridine-N3-)-methyltransferase RlmH</fullName>
    </alternativeName>
</protein>
<organism>
    <name type="scientific">Burkholderia cenocepacia (strain HI2424)</name>
    <dbReference type="NCBI Taxonomy" id="331272"/>
    <lineage>
        <taxon>Bacteria</taxon>
        <taxon>Pseudomonadati</taxon>
        <taxon>Pseudomonadota</taxon>
        <taxon>Betaproteobacteria</taxon>
        <taxon>Burkholderiales</taxon>
        <taxon>Burkholderiaceae</taxon>
        <taxon>Burkholderia</taxon>
        <taxon>Burkholderia cepacia complex</taxon>
    </lineage>
</organism>
<dbReference type="EC" id="2.1.1.177" evidence="1"/>
<dbReference type="EMBL" id="CP000458">
    <property type="protein sequence ID" value="ABK09050.1"/>
    <property type="molecule type" value="Genomic_DNA"/>
</dbReference>
<dbReference type="RefSeq" id="WP_006478222.1">
    <property type="nucleotide sequence ID" value="NC_008542.1"/>
</dbReference>
<dbReference type="SMR" id="A0K973"/>
<dbReference type="GeneID" id="83049111"/>
<dbReference type="KEGG" id="bch:Bcen2424_2299"/>
<dbReference type="HOGENOM" id="CLU_100552_1_0_4"/>
<dbReference type="GO" id="GO:0005737">
    <property type="term" value="C:cytoplasm"/>
    <property type="evidence" value="ECO:0007669"/>
    <property type="project" value="UniProtKB-SubCell"/>
</dbReference>
<dbReference type="GO" id="GO:0070038">
    <property type="term" value="F:rRNA (pseudouridine-N3-)-methyltransferase activity"/>
    <property type="evidence" value="ECO:0007669"/>
    <property type="project" value="UniProtKB-UniRule"/>
</dbReference>
<dbReference type="CDD" id="cd18081">
    <property type="entry name" value="RlmH-like"/>
    <property type="match status" value="1"/>
</dbReference>
<dbReference type="Gene3D" id="3.40.1280.10">
    <property type="match status" value="1"/>
</dbReference>
<dbReference type="HAMAP" id="MF_00658">
    <property type="entry name" value="23SrRNA_methyltr_H"/>
    <property type="match status" value="1"/>
</dbReference>
<dbReference type="InterPro" id="IPR029028">
    <property type="entry name" value="Alpha/beta_knot_MTases"/>
</dbReference>
<dbReference type="InterPro" id="IPR003742">
    <property type="entry name" value="RlmH-like"/>
</dbReference>
<dbReference type="InterPro" id="IPR029026">
    <property type="entry name" value="tRNA_m1G_MTases_N"/>
</dbReference>
<dbReference type="NCBIfam" id="NF000986">
    <property type="entry name" value="PRK00103.1-4"/>
    <property type="match status" value="1"/>
</dbReference>
<dbReference type="NCBIfam" id="TIGR00246">
    <property type="entry name" value="tRNA_RlmH_YbeA"/>
    <property type="match status" value="1"/>
</dbReference>
<dbReference type="PANTHER" id="PTHR33603">
    <property type="entry name" value="METHYLTRANSFERASE"/>
    <property type="match status" value="1"/>
</dbReference>
<dbReference type="PANTHER" id="PTHR33603:SF1">
    <property type="entry name" value="RIBOSOMAL RNA LARGE SUBUNIT METHYLTRANSFERASE H"/>
    <property type="match status" value="1"/>
</dbReference>
<dbReference type="Pfam" id="PF02590">
    <property type="entry name" value="SPOUT_MTase"/>
    <property type="match status" value="1"/>
</dbReference>
<dbReference type="PIRSF" id="PIRSF004505">
    <property type="entry name" value="MT_bac"/>
    <property type="match status" value="1"/>
</dbReference>
<dbReference type="SUPFAM" id="SSF75217">
    <property type="entry name" value="alpha/beta knot"/>
    <property type="match status" value="1"/>
</dbReference>
<comment type="function">
    <text evidence="1">Specifically methylates the pseudouridine at position 1915 (m3Psi1915) in 23S rRNA.</text>
</comment>
<comment type="catalytic activity">
    <reaction evidence="1">
        <text>pseudouridine(1915) in 23S rRNA + S-adenosyl-L-methionine = N(3)-methylpseudouridine(1915) in 23S rRNA + S-adenosyl-L-homocysteine + H(+)</text>
        <dbReference type="Rhea" id="RHEA:42752"/>
        <dbReference type="Rhea" id="RHEA-COMP:10221"/>
        <dbReference type="Rhea" id="RHEA-COMP:10222"/>
        <dbReference type="ChEBI" id="CHEBI:15378"/>
        <dbReference type="ChEBI" id="CHEBI:57856"/>
        <dbReference type="ChEBI" id="CHEBI:59789"/>
        <dbReference type="ChEBI" id="CHEBI:65314"/>
        <dbReference type="ChEBI" id="CHEBI:74486"/>
        <dbReference type="EC" id="2.1.1.177"/>
    </reaction>
</comment>
<comment type="subunit">
    <text evidence="1">Homodimer.</text>
</comment>
<comment type="subcellular location">
    <subcellularLocation>
        <location evidence="1">Cytoplasm</location>
    </subcellularLocation>
</comment>
<comment type="similarity">
    <text evidence="1">Belongs to the RNA methyltransferase RlmH family.</text>
</comment>
<reference key="1">
    <citation type="submission" date="2006-08" db="EMBL/GenBank/DDBJ databases">
        <title>Complete sequence of chromosome 1 of Burkholderia cenocepacia HI2424.</title>
        <authorList>
            <person name="Copeland A."/>
            <person name="Lucas S."/>
            <person name="Lapidus A."/>
            <person name="Barry K."/>
            <person name="Detter J.C."/>
            <person name="Glavina del Rio T."/>
            <person name="Hammon N."/>
            <person name="Israni S."/>
            <person name="Pitluck S."/>
            <person name="Chain P."/>
            <person name="Malfatti S."/>
            <person name="Shin M."/>
            <person name="Vergez L."/>
            <person name="Schmutz J."/>
            <person name="Larimer F."/>
            <person name="Land M."/>
            <person name="Hauser L."/>
            <person name="Kyrpides N."/>
            <person name="Kim E."/>
            <person name="LiPuma J.J."/>
            <person name="Gonzalez C.F."/>
            <person name="Konstantinidis K."/>
            <person name="Tiedje J.M."/>
            <person name="Richardson P."/>
        </authorList>
    </citation>
    <scope>NUCLEOTIDE SEQUENCE [LARGE SCALE GENOMIC DNA]</scope>
    <source>
        <strain>HI2424</strain>
    </source>
</reference>
<proteinExistence type="inferred from homology"/>
<name>RLMH_BURCH</name>
<evidence type="ECO:0000255" key="1">
    <source>
        <dbReference type="HAMAP-Rule" id="MF_00658"/>
    </source>
</evidence>
<gene>
    <name evidence="1" type="primary">rlmH</name>
    <name type="ordered locus">Bcen2424_2299</name>
</gene>
<keyword id="KW-0963">Cytoplasm</keyword>
<keyword id="KW-0489">Methyltransferase</keyword>
<keyword id="KW-0698">rRNA processing</keyword>
<keyword id="KW-0949">S-adenosyl-L-methionine</keyword>
<keyword id="KW-0808">Transferase</keyword>